<keyword id="KW-0067">ATP-binding</keyword>
<keyword id="KW-1003">Cell membrane</keyword>
<keyword id="KW-0472">Membrane</keyword>
<keyword id="KW-0547">Nucleotide-binding</keyword>
<keyword id="KW-0918">Phosphonate transport</keyword>
<keyword id="KW-1185">Reference proteome</keyword>
<keyword id="KW-1278">Translocase</keyword>
<keyword id="KW-0813">Transport</keyword>
<proteinExistence type="inferred from homology"/>
<comment type="function">
    <text evidence="1">Part of the ABC transporter complex PhnCDE involved in phosphonates import. Responsible for energy coupling to the transport system.</text>
</comment>
<comment type="catalytic activity">
    <reaction evidence="1">
        <text>phosphonate(out) + ATP + H2O = phosphonate(in) + ADP + phosphate + H(+)</text>
        <dbReference type="Rhea" id="RHEA:18065"/>
        <dbReference type="ChEBI" id="CHEBI:15377"/>
        <dbReference type="ChEBI" id="CHEBI:15378"/>
        <dbReference type="ChEBI" id="CHEBI:16215"/>
        <dbReference type="ChEBI" id="CHEBI:30616"/>
        <dbReference type="ChEBI" id="CHEBI:43474"/>
        <dbReference type="ChEBI" id="CHEBI:456216"/>
        <dbReference type="EC" id="7.3.2.2"/>
    </reaction>
</comment>
<comment type="subunit">
    <text evidence="1">The complex is composed of two ATP-binding proteins (PhnC), two transmembrane proteins (PhnE) and a solute-binding protein (PhnD).</text>
</comment>
<comment type="subcellular location">
    <subcellularLocation>
        <location evidence="1">Cell membrane</location>
        <topology evidence="1">Peripheral membrane protein</topology>
    </subcellularLocation>
</comment>
<comment type="similarity">
    <text evidence="1">Belongs to the ABC transporter superfamily. Phosphonates importer (TC 3.A.1.9.1) family.</text>
</comment>
<sequence length="268" mass="28874">MSADSRAEVVLHAEAVTKRFGATLALDAVSMTVHRSELVVLLGLSGSGKSTLLRCFNGLHPVTSGAVTVAGTRVDTAPRATVRALRRDIGFVFQQFNLVGRLSCLDNVLLGGLARLRLPRYGALTYPKRMRAEAVAHLDRVGLADLAHRRTDTLSGGQQQRVAIARTLMQRPKLVLADEPVASLDPENAGVVMDLLFRICLEDNLTVVCTLHQVDLALGWAHRVIGLRDGRKVFDRPAAGLSRDEVMAIYQRAEVTRSAPAGLAAGAL</sequence>
<accession>Q5YTW4</accession>
<evidence type="ECO:0000255" key="1">
    <source>
        <dbReference type="HAMAP-Rule" id="MF_01713"/>
    </source>
</evidence>
<protein>
    <recommendedName>
        <fullName evidence="1">Phosphonates import ATP-binding protein PhnC</fullName>
        <ecNumber evidence="1">7.3.2.2</ecNumber>
    </recommendedName>
</protein>
<dbReference type="EC" id="7.3.2.2" evidence="1"/>
<dbReference type="EMBL" id="AP006618">
    <property type="protein sequence ID" value="BAD58377.1"/>
    <property type="molecule type" value="Genomic_DNA"/>
</dbReference>
<dbReference type="SMR" id="Q5YTW4"/>
<dbReference type="STRING" id="247156.NFA_35290"/>
<dbReference type="KEGG" id="nfa:NFA_35290"/>
<dbReference type="eggNOG" id="COG3638">
    <property type="taxonomic scope" value="Bacteria"/>
</dbReference>
<dbReference type="HOGENOM" id="CLU_000604_1_22_11"/>
<dbReference type="Proteomes" id="UP000006820">
    <property type="component" value="Chromosome"/>
</dbReference>
<dbReference type="GO" id="GO:0005886">
    <property type="term" value="C:plasma membrane"/>
    <property type="evidence" value="ECO:0007669"/>
    <property type="project" value="UniProtKB-SubCell"/>
</dbReference>
<dbReference type="GO" id="GO:0015416">
    <property type="term" value="F:ABC-type phosphonate transporter activity"/>
    <property type="evidence" value="ECO:0007669"/>
    <property type="project" value="UniProtKB-EC"/>
</dbReference>
<dbReference type="GO" id="GO:0005524">
    <property type="term" value="F:ATP binding"/>
    <property type="evidence" value="ECO:0007669"/>
    <property type="project" value="UniProtKB-KW"/>
</dbReference>
<dbReference type="GO" id="GO:0016887">
    <property type="term" value="F:ATP hydrolysis activity"/>
    <property type="evidence" value="ECO:0007669"/>
    <property type="project" value="InterPro"/>
</dbReference>
<dbReference type="CDD" id="cd03256">
    <property type="entry name" value="ABC_PhnC_transporter"/>
    <property type="match status" value="1"/>
</dbReference>
<dbReference type="Gene3D" id="3.40.50.300">
    <property type="entry name" value="P-loop containing nucleotide triphosphate hydrolases"/>
    <property type="match status" value="1"/>
</dbReference>
<dbReference type="InterPro" id="IPR003593">
    <property type="entry name" value="AAA+_ATPase"/>
</dbReference>
<dbReference type="InterPro" id="IPR003439">
    <property type="entry name" value="ABC_transporter-like_ATP-bd"/>
</dbReference>
<dbReference type="InterPro" id="IPR017871">
    <property type="entry name" value="ABC_transporter-like_CS"/>
</dbReference>
<dbReference type="InterPro" id="IPR012693">
    <property type="entry name" value="ABC_transpr_PhnC"/>
</dbReference>
<dbReference type="InterPro" id="IPR050086">
    <property type="entry name" value="MetN_ABC_transporter-like"/>
</dbReference>
<dbReference type="InterPro" id="IPR027417">
    <property type="entry name" value="P-loop_NTPase"/>
</dbReference>
<dbReference type="NCBIfam" id="TIGR02315">
    <property type="entry name" value="ABC_phnC"/>
    <property type="match status" value="1"/>
</dbReference>
<dbReference type="PANTHER" id="PTHR43166">
    <property type="entry name" value="AMINO ACID IMPORT ATP-BINDING PROTEIN"/>
    <property type="match status" value="1"/>
</dbReference>
<dbReference type="PANTHER" id="PTHR43166:SF6">
    <property type="entry name" value="PHOSPHONATES IMPORT ATP-BINDING PROTEIN PHNC"/>
    <property type="match status" value="1"/>
</dbReference>
<dbReference type="Pfam" id="PF00005">
    <property type="entry name" value="ABC_tran"/>
    <property type="match status" value="1"/>
</dbReference>
<dbReference type="SMART" id="SM00382">
    <property type="entry name" value="AAA"/>
    <property type="match status" value="1"/>
</dbReference>
<dbReference type="SUPFAM" id="SSF52540">
    <property type="entry name" value="P-loop containing nucleoside triphosphate hydrolases"/>
    <property type="match status" value="1"/>
</dbReference>
<dbReference type="PROSITE" id="PS00211">
    <property type="entry name" value="ABC_TRANSPORTER_1"/>
    <property type="match status" value="1"/>
</dbReference>
<dbReference type="PROSITE" id="PS50893">
    <property type="entry name" value="ABC_TRANSPORTER_2"/>
    <property type="match status" value="1"/>
</dbReference>
<dbReference type="PROSITE" id="PS51249">
    <property type="entry name" value="PHNC"/>
    <property type="match status" value="1"/>
</dbReference>
<gene>
    <name evidence="1" type="primary">phnC</name>
    <name type="ordered locus">NFA_35290</name>
</gene>
<organism>
    <name type="scientific">Nocardia farcinica (strain IFM 10152)</name>
    <dbReference type="NCBI Taxonomy" id="247156"/>
    <lineage>
        <taxon>Bacteria</taxon>
        <taxon>Bacillati</taxon>
        <taxon>Actinomycetota</taxon>
        <taxon>Actinomycetes</taxon>
        <taxon>Mycobacteriales</taxon>
        <taxon>Nocardiaceae</taxon>
        <taxon>Nocardia</taxon>
    </lineage>
</organism>
<reference key="1">
    <citation type="journal article" date="2004" name="Proc. Natl. Acad. Sci. U.S.A.">
        <title>The complete genomic sequence of Nocardia farcinica IFM 10152.</title>
        <authorList>
            <person name="Ishikawa J."/>
            <person name="Yamashita A."/>
            <person name="Mikami Y."/>
            <person name="Hoshino Y."/>
            <person name="Kurita H."/>
            <person name="Hotta K."/>
            <person name="Shiba T."/>
            <person name="Hattori M."/>
        </authorList>
    </citation>
    <scope>NUCLEOTIDE SEQUENCE [LARGE SCALE GENOMIC DNA]</scope>
    <source>
        <strain>IFM 10152</strain>
    </source>
</reference>
<name>PHNC_NOCFA</name>
<feature type="chain" id="PRO_0000092715" description="Phosphonates import ATP-binding protein PhnC">
    <location>
        <begin position="1"/>
        <end position="268"/>
    </location>
</feature>
<feature type="domain" description="ABC transporter" evidence="1">
    <location>
        <begin position="11"/>
        <end position="254"/>
    </location>
</feature>
<feature type="binding site" evidence="1">
    <location>
        <begin position="43"/>
        <end position="50"/>
    </location>
    <ligand>
        <name>ATP</name>
        <dbReference type="ChEBI" id="CHEBI:30616"/>
    </ligand>
</feature>